<name>MIAB_PICP2</name>
<organism>
    <name type="scientific">Picosynechococcus sp. (strain ATCC 27264 / PCC 7002 / PR-6)</name>
    <name type="common">Agmenellum quadruplicatum</name>
    <dbReference type="NCBI Taxonomy" id="32049"/>
    <lineage>
        <taxon>Bacteria</taxon>
        <taxon>Bacillati</taxon>
        <taxon>Cyanobacteriota</taxon>
        <taxon>Cyanophyceae</taxon>
        <taxon>Oscillatoriophycideae</taxon>
        <taxon>Chroococcales</taxon>
        <taxon>Geminocystaceae</taxon>
        <taxon>Picosynechococcus</taxon>
    </lineage>
</organism>
<comment type="function">
    <text evidence="1">Catalyzes the methylthiolation of N6-(dimethylallyl)adenosine (i(6)A), leading to the formation of 2-methylthio-N6-(dimethylallyl)adenosine (ms(2)i(6)A) at position 37 in tRNAs that read codons beginning with uridine.</text>
</comment>
<comment type="catalytic activity">
    <reaction evidence="1">
        <text>N(6)-dimethylallyladenosine(37) in tRNA + (sulfur carrier)-SH + AH2 + 2 S-adenosyl-L-methionine = 2-methylsulfanyl-N(6)-dimethylallyladenosine(37) in tRNA + (sulfur carrier)-H + 5'-deoxyadenosine + L-methionine + A + S-adenosyl-L-homocysteine + 2 H(+)</text>
        <dbReference type="Rhea" id="RHEA:37067"/>
        <dbReference type="Rhea" id="RHEA-COMP:10375"/>
        <dbReference type="Rhea" id="RHEA-COMP:10376"/>
        <dbReference type="Rhea" id="RHEA-COMP:14737"/>
        <dbReference type="Rhea" id="RHEA-COMP:14739"/>
        <dbReference type="ChEBI" id="CHEBI:13193"/>
        <dbReference type="ChEBI" id="CHEBI:15378"/>
        <dbReference type="ChEBI" id="CHEBI:17319"/>
        <dbReference type="ChEBI" id="CHEBI:17499"/>
        <dbReference type="ChEBI" id="CHEBI:29917"/>
        <dbReference type="ChEBI" id="CHEBI:57844"/>
        <dbReference type="ChEBI" id="CHEBI:57856"/>
        <dbReference type="ChEBI" id="CHEBI:59789"/>
        <dbReference type="ChEBI" id="CHEBI:64428"/>
        <dbReference type="ChEBI" id="CHEBI:74415"/>
        <dbReference type="ChEBI" id="CHEBI:74417"/>
        <dbReference type="EC" id="2.8.4.3"/>
    </reaction>
</comment>
<comment type="cofactor">
    <cofactor evidence="1">
        <name>[4Fe-4S] cluster</name>
        <dbReference type="ChEBI" id="CHEBI:49883"/>
    </cofactor>
    <text evidence="1">Binds 2 [4Fe-4S] clusters. One cluster is coordinated with 3 cysteines and an exchangeable S-adenosyl-L-methionine.</text>
</comment>
<comment type="subunit">
    <text evidence="1">Monomer.</text>
</comment>
<comment type="subcellular location">
    <subcellularLocation>
        <location evidence="1">Cytoplasm</location>
    </subcellularLocation>
</comment>
<comment type="similarity">
    <text evidence="1">Belongs to the methylthiotransferase family. MiaB subfamily.</text>
</comment>
<proteinExistence type="inferred from homology"/>
<accession>B1XQK7</accession>
<gene>
    <name evidence="1" type="primary">miaB</name>
    <name type="ordered locus">SYNPCC7002_A1915</name>
</gene>
<keyword id="KW-0004">4Fe-4S</keyword>
<keyword id="KW-0963">Cytoplasm</keyword>
<keyword id="KW-0408">Iron</keyword>
<keyword id="KW-0411">Iron-sulfur</keyword>
<keyword id="KW-0479">Metal-binding</keyword>
<keyword id="KW-1185">Reference proteome</keyword>
<keyword id="KW-0949">S-adenosyl-L-methionine</keyword>
<keyword id="KW-0808">Transferase</keyword>
<keyword id="KW-0819">tRNA processing</keyword>
<protein>
    <recommendedName>
        <fullName evidence="1">tRNA-2-methylthio-N(6)-dimethylallyladenosine synthase</fullName>
        <ecNumber evidence="1">2.8.4.3</ecNumber>
    </recommendedName>
    <alternativeName>
        <fullName evidence="1">(Dimethylallyl)adenosine tRNA methylthiotransferase MiaB</fullName>
    </alternativeName>
    <alternativeName>
        <fullName evidence="1">tRNA-i(6)A37 methylthiotransferase</fullName>
    </alternativeName>
</protein>
<sequence length="451" mass="51060">MTKPRQYHITTFGCQMNKADSERMAGILEEMGYHFTEDPYAADLVLYNTCTIRDNAEQKVYSYLGRQAKRKQEKPDLTLIVAGCVAQQEGESLLRRVPELDLIMGPQHANRLQDLLEQVEGGSQVVATEPIHIVEDITKPRRDSTVTAWVNVIYGCNEHCTYCVVPGVRGTEQSRYPEAIRAEMEELGRQGFKEVTLLGQNIDAYGRDLPGTTPEGRNKYTLTDLLYYVHDVPGIERIRFATSHPRYFTERLIKACQELPKVCEHFHIPFQSGDNEVLKAMRRGYTHEKYRRIINTIRSYMPDASISADAIVAFPGETEEQFENTLKLVDEIGFDQLNTAAYSPRPGTPAATWDNQLSEEVKGDRLQRLNHLVAQKAAERSQRYAGRIEEVLVEDQNPKNPSQVMGRTRGNRLTFFEGEINELKGKIVAVKITEARAFSLTGEAVEALVTA</sequence>
<reference key="1">
    <citation type="submission" date="2008-02" db="EMBL/GenBank/DDBJ databases">
        <title>Complete sequence of Synechococcus sp. PCC 7002.</title>
        <authorList>
            <person name="Li T."/>
            <person name="Zhao J."/>
            <person name="Zhao C."/>
            <person name="Liu Z."/>
            <person name="Zhao F."/>
            <person name="Marquardt J."/>
            <person name="Nomura C.T."/>
            <person name="Persson S."/>
            <person name="Detter J.C."/>
            <person name="Richardson P.M."/>
            <person name="Lanz C."/>
            <person name="Schuster S.C."/>
            <person name="Wang J."/>
            <person name="Li S."/>
            <person name="Huang X."/>
            <person name="Cai T."/>
            <person name="Yu Z."/>
            <person name="Luo J."/>
            <person name="Zhao J."/>
            <person name="Bryant D.A."/>
        </authorList>
    </citation>
    <scope>NUCLEOTIDE SEQUENCE [LARGE SCALE GENOMIC DNA]</scope>
    <source>
        <strain>ATCC 27264 / PCC 7002 / PR-6</strain>
    </source>
</reference>
<dbReference type="EC" id="2.8.4.3" evidence="1"/>
<dbReference type="EMBL" id="CP000951">
    <property type="protein sequence ID" value="ACA99902.1"/>
    <property type="molecule type" value="Genomic_DNA"/>
</dbReference>
<dbReference type="RefSeq" id="WP_012307525.1">
    <property type="nucleotide sequence ID" value="NZ_JAHHPU010000002.1"/>
</dbReference>
<dbReference type="SMR" id="B1XQK7"/>
<dbReference type="STRING" id="32049.SYNPCC7002_A1915"/>
<dbReference type="KEGG" id="syp:SYNPCC7002_A1915"/>
<dbReference type="eggNOG" id="COG0621">
    <property type="taxonomic scope" value="Bacteria"/>
</dbReference>
<dbReference type="HOGENOM" id="CLU_018697_2_2_3"/>
<dbReference type="Proteomes" id="UP000001688">
    <property type="component" value="Chromosome"/>
</dbReference>
<dbReference type="GO" id="GO:0005737">
    <property type="term" value="C:cytoplasm"/>
    <property type="evidence" value="ECO:0007669"/>
    <property type="project" value="UniProtKB-SubCell"/>
</dbReference>
<dbReference type="GO" id="GO:0051539">
    <property type="term" value="F:4 iron, 4 sulfur cluster binding"/>
    <property type="evidence" value="ECO:0007669"/>
    <property type="project" value="UniProtKB-UniRule"/>
</dbReference>
<dbReference type="GO" id="GO:0046872">
    <property type="term" value="F:metal ion binding"/>
    <property type="evidence" value="ECO:0007669"/>
    <property type="project" value="UniProtKB-KW"/>
</dbReference>
<dbReference type="GO" id="GO:0035596">
    <property type="term" value="F:methylthiotransferase activity"/>
    <property type="evidence" value="ECO:0007669"/>
    <property type="project" value="InterPro"/>
</dbReference>
<dbReference type="GO" id="GO:0035600">
    <property type="term" value="P:tRNA methylthiolation"/>
    <property type="evidence" value="ECO:0007669"/>
    <property type="project" value="TreeGrafter"/>
</dbReference>
<dbReference type="CDD" id="cd01335">
    <property type="entry name" value="Radical_SAM"/>
    <property type="match status" value="1"/>
</dbReference>
<dbReference type="FunFam" id="3.40.50.12160:FF:000006">
    <property type="entry name" value="tRNA-2-methylthio-N(6)-dimethylallyladenosine synthase"/>
    <property type="match status" value="1"/>
</dbReference>
<dbReference type="FunFam" id="3.80.30.20:FF:000001">
    <property type="entry name" value="tRNA-2-methylthio-N(6)-dimethylallyladenosine synthase 2"/>
    <property type="match status" value="1"/>
</dbReference>
<dbReference type="Gene3D" id="3.40.50.12160">
    <property type="entry name" value="Methylthiotransferase, N-terminal domain"/>
    <property type="match status" value="1"/>
</dbReference>
<dbReference type="Gene3D" id="3.80.30.20">
    <property type="entry name" value="tm_1862 like domain"/>
    <property type="match status" value="1"/>
</dbReference>
<dbReference type="HAMAP" id="MF_01864">
    <property type="entry name" value="tRNA_metthiotr_MiaB"/>
    <property type="match status" value="1"/>
</dbReference>
<dbReference type="InterPro" id="IPR006638">
    <property type="entry name" value="Elp3/MiaA/NifB-like_rSAM"/>
</dbReference>
<dbReference type="InterPro" id="IPR005839">
    <property type="entry name" value="Methylthiotransferase"/>
</dbReference>
<dbReference type="InterPro" id="IPR020612">
    <property type="entry name" value="Methylthiotransferase_CS"/>
</dbReference>
<dbReference type="InterPro" id="IPR013848">
    <property type="entry name" value="Methylthiotransferase_N"/>
</dbReference>
<dbReference type="InterPro" id="IPR038135">
    <property type="entry name" value="Methylthiotransferase_N_sf"/>
</dbReference>
<dbReference type="InterPro" id="IPR006463">
    <property type="entry name" value="MiaB_methiolase"/>
</dbReference>
<dbReference type="InterPro" id="IPR007197">
    <property type="entry name" value="rSAM"/>
</dbReference>
<dbReference type="InterPro" id="IPR023404">
    <property type="entry name" value="rSAM_horseshoe"/>
</dbReference>
<dbReference type="InterPro" id="IPR002792">
    <property type="entry name" value="TRAM_dom"/>
</dbReference>
<dbReference type="NCBIfam" id="TIGR01574">
    <property type="entry name" value="miaB-methiolase"/>
    <property type="match status" value="1"/>
</dbReference>
<dbReference type="NCBIfam" id="TIGR00089">
    <property type="entry name" value="MiaB/RimO family radical SAM methylthiotransferase"/>
    <property type="match status" value="1"/>
</dbReference>
<dbReference type="PANTHER" id="PTHR43020">
    <property type="entry name" value="CDK5 REGULATORY SUBUNIT-ASSOCIATED PROTEIN 1"/>
    <property type="match status" value="1"/>
</dbReference>
<dbReference type="PANTHER" id="PTHR43020:SF2">
    <property type="entry name" value="MITOCHONDRIAL TRNA METHYLTHIOTRANSFERASE CDK5RAP1"/>
    <property type="match status" value="1"/>
</dbReference>
<dbReference type="Pfam" id="PF04055">
    <property type="entry name" value="Radical_SAM"/>
    <property type="match status" value="1"/>
</dbReference>
<dbReference type="Pfam" id="PF01938">
    <property type="entry name" value="TRAM"/>
    <property type="match status" value="1"/>
</dbReference>
<dbReference type="Pfam" id="PF00919">
    <property type="entry name" value="UPF0004"/>
    <property type="match status" value="1"/>
</dbReference>
<dbReference type="SFLD" id="SFLDF00273">
    <property type="entry name" value="(dimethylallyl)adenosine_tRNA"/>
    <property type="match status" value="1"/>
</dbReference>
<dbReference type="SFLD" id="SFLDG01082">
    <property type="entry name" value="B12-binding_domain_containing"/>
    <property type="match status" value="1"/>
</dbReference>
<dbReference type="SFLD" id="SFLDS00029">
    <property type="entry name" value="Radical_SAM"/>
    <property type="match status" value="1"/>
</dbReference>
<dbReference type="SMART" id="SM00729">
    <property type="entry name" value="Elp3"/>
    <property type="match status" value="1"/>
</dbReference>
<dbReference type="SUPFAM" id="SSF102114">
    <property type="entry name" value="Radical SAM enzymes"/>
    <property type="match status" value="1"/>
</dbReference>
<dbReference type="PROSITE" id="PS51449">
    <property type="entry name" value="MTTASE_N"/>
    <property type="match status" value="1"/>
</dbReference>
<dbReference type="PROSITE" id="PS01278">
    <property type="entry name" value="MTTASE_RADICAL"/>
    <property type="match status" value="1"/>
</dbReference>
<dbReference type="PROSITE" id="PS51918">
    <property type="entry name" value="RADICAL_SAM"/>
    <property type="match status" value="1"/>
</dbReference>
<dbReference type="PROSITE" id="PS50926">
    <property type="entry name" value="TRAM"/>
    <property type="match status" value="1"/>
</dbReference>
<feature type="chain" id="PRO_0000374594" description="tRNA-2-methylthio-N(6)-dimethylallyladenosine synthase">
    <location>
        <begin position="1"/>
        <end position="451"/>
    </location>
</feature>
<feature type="domain" description="MTTase N-terminal" evidence="1">
    <location>
        <begin position="5"/>
        <end position="121"/>
    </location>
</feature>
<feature type="domain" description="Radical SAM core" evidence="2">
    <location>
        <begin position="142"/>
        <end position="379"/>
    </location>
</feature>
<feature type="domain" description="TRAM" evidence="1">
    <location>
        <begin position="382"/>
        <end position="446"/>
    </location>
</feature>
<feature type="binding site" evidence="1">
    <location>
        <position position="14"/>
    </location>
    <ligand>
        <name>[4Fe-4S] cluster</name>
        <dbReference type="ChEBI" id="CHEBI:49883"/>
        <label>1</label>
    </ligand>
</feature>
<feature type="binding site" evidence="1">
    <location>
        <position position="50"/>
    </location>
    <ligand>
        <name>[4Fe-4S] cluster</name>
        <dbReference type="ChEBI" id="CHEBI:49883"/>
        <label>1</label>
    </ligand>
</feature>
<feature type="binding site" evidence="1">
    <location>
        <position position="84"/>
    </location>
    <ligand>
        <name>[4Fe-4S] cluster</name>
        <dbReference type="ChEBI" id="CHEBI:49883"/>
        <label>1</label>
    </ligand>
</feature>
<feature type="binding site" evidence="1">
    <location>
        <position position="156"/>
    </location>
    <ligand>
        <name>[4Fe-4S] cluster</name>
        <dbReference type="ChEBI" id="CHEBI:49883"/>
        <label>2</label>
        <note>4Fe-4S-S-AdoMet</note>
    </ligand>
</feature>
<feature type="binding site" evidence="1">
    <location>
        <position position="160"/>
    </location>
    <ligand>
        <name>[4Fe-4S] cluster</name>
        <dbReference type="ChEBI" id="CHEBI:49883"/>
        <label>2</label>
        <note>4Fe-4S-S-AdoMet</note>
    </ligand>
</feature>
<feature type="binding site" evidence="1">
    <location>
        <position position="163"/>
    </location>
    <ligand>
        <name>[4Fe-4S] cluster</name>
        <dbReference type="ChEBI" id="CHEBI:49883"/>
        <label>2</label>
        <note>4Fe-4S-S-AdoMet</note>
    </ligand>
</feature>
<evidence type="ECO:0000255" key="1">
    <source>
        <dbReference type="HAMAP-Rule" id="MF_01864"/>
    </source>
</evidence>
<evidence type="ECO:0000255" key="2">
    <source>
        <dbReference type="PROSITE-ProRule" id="PRU01266"/>
    </source>
</evidence>